<protein>
    <recommendedName>
        <fullName evidence="1">Large ribosomal subunit protein uL6</fullName>
    </recommendedName>
    <alternativeName>
        <fullName evidence="2">50S ribosomal protein L6</fullName>
    </alternativeName>
</protein>
<feature type="chain" id="PRO_0000265223" description="Large ribosomal subunit protein uL6">
    <location>
        <begin position="1"/>
        <end position="177"/>
    </location>
</feature>
<comment type="function">
    <text evidence="1">This protein binds to the 23S rRNA, and is important in its secondary structure. It is located near the subunit interface in the base of the L7/L12 stalk, and near the tRNA binding site of the peptidyltransferase center.</text>
</comment>
<comment type="subunit">
    <text evidence="1">Part of the 50S ribosomal subunit.</text>
</comment>
<comment type="similarity">
    <text evidence="1">Belongs to the universal ribosomal protein uL6 family.</text>
</comment>
<keyword id="KW-1185">Reference proteome</keyword>
<keyword id="KW-0687">Ribonucleoprotein</keyword>
<keyword id="KW-0689">Ribosomal protein</keyword>
<keyword id="KW-0694">RNA-binding</keyword>
<keyword id="KW-0699">rRNA-binding</keyword>
<evidence type="ECO:0000255" key="1">
    <source>
        <dbReference type="HAMAP-Rule" id="MF_01365"/>
    </source>
</evidence>
<evidence type="ECO:0000305" key="2"/>
<accession>Q7VTB6</accession>
<proteinExistence type="inferred from homology"/>
<sequence length="177" mass="19172">MSRIAKYPVELPKGVEASIQPDQITVKGPLGILVQSLTGDVNVAQEDGKLTFVVANDSRHANAMSGTLRALVANMVTGVSKGFERKLNLVGVGYRAQIQGDAVKLQLGFSHDVVHQLPAGVKAECPTQTEIVIKGPNKQVVGQVAAEIRKYREPEPYKGKGVRYADERVVIKETKKK</sequence>
<reference key="1">
    <citation type="journal article" date="2003" name="Nat. Genet.">
        <title>Comparative analysis of the genome sequences of Bordetella pertussis, Bordetella parapertussis and Bordetella bronchiseptica.</title>
        <authorList>
            <person name="Parkhill J."/>
            <person name="Sebaihia M."/>
            <person name="Preston A."/>
            <person name="Murphy L.D."/>
            <person name="Thomson N.R."/>
            <person name="Harris D.E."/>
            <person name="Holden M.T.G."/>
            <person name="Churcher C.M."/>
            <person name="Bentley S.D."/>
            <person name="Mungall K.L."/>
            <person name="Cerdeno-Tarraga A.-M."/>
            <person name="Temple L."/>
            <person name="James K.D."/>
            <person name="Harris B."/>
            <person name="Quail M.A."/>
            <person name="Achtman M."/>
            <person name="Atkin R."/>
            <person name="Baker S."/>
            <person name="Basham D."/>
            <person name="Bason N."/>
            <person name="Cherevach I."/>
            <person name="Chillingworth T."/>
            <person name="Collins M."/>
            <person name="Cronin A."/>
            <person name="Davis P."/>
            <person name="Doggett J."/>
            <person name="Feltwell T."/>
            <person name="Goble A."/>
            <person name="Hamlin N."/>
            <person name="Hauser H."/>
            <person name="Holroyd S."/>
            <person name="Jagels K."/>
            <person name="Leather S."/>
            <person name="Moule S."/>
            <person name="Norberczak H."/>
            <person name="O'Neil S."/>
            <person name="Ormond D."/>
            <person name="Price C."/>
            <person name="Rabbinowitsch E."/>
            <person name="Rutter S."/>
            <person name="Sanders M."/>
            <person name="Saunders D."/>
            <person name="Seeger K."/>
            <person name="Sharp S."/>
            <person name="Simmonds M."/>
            <person name="Skelton J."/>
            <person name="Squares R."/>
            <person name="Squares S."/>
            <person name="Stevens K."/>
            <person name="Unwin L."/>
            <person name="Whitehead S."/>
            <person name="Barrell B.G."/>
            <person name="Maskell D.J."/>
        </authorList>
    </citation>
    <scope>NUCLEOTIDE SEQUENCE [LARGE SCALE GENOMIC DNA]</scope>
    <source>
        <strain>Tohama I / ATCC BAA-589 / NCTC 13251</strain>
    </source>
</reference>
<organism>
    <name type="scientific">Bordetella pertussis (strain Tohama I / ATCC BAA-589 / NCTC 13251)</name>
    <dbReference type="NCBI Taxonomy" id="257313"/>
    <lineage>
        <taxon>Bacteria</taxon>
        <taxon>Pseudomonadati</taxon>
        <taxon>Pseudomonadota</taxon>
        <taxon>Betaproteobacteria</taxon>
        <taxon>Burkholderiales</taxon>
        <taxon>Alcaligenaceae</taxon>
        <taxon>Bordetella</taxon>
    </lineage>
</organism>
<gene>
    <name evidence="1" type="primary">rplF</name>
    <name type="ordered locus">BP3631</name>
</gene>
<dbReference type="EMBL" id="BX640422">
    <property type="protein sequence ID" value="CAE43888.1"/>
    <property type="molecule type" value="Genomic_DNA"/>
</dbReference>
<dbReference type="RefSeq" id="NP_882140.1">
    <property type="nucleotide sequence ID" value="NC_002929.2"/>
</dbReference>
<dbReference type="RefSeq" id="WP_010931568.1">
    <property type="nucleotide sequence ID" value="NZ_CP039022.1"/>
</dbReference>
<dbReference type="SMR" id="Q7VTB6"/>
<dbReference type="STRING" id="257313.BP3631"/>
<dbReference type="PaxDb" id="257313-BP3631"/>
<dbReference type="GeneID" id="69600141"/>
<dbReference type="KEGG" id="bpe:BP3631"/>
<dbReference type="PATRIC" id="fig|257313.5.peg.3928"/>
<dbReference type="eggNOG" id="COG0097">
    <property type="taxonomic scope" value="Bacteria"/>
</dbReference>
<dbReference type="HOGENOM" id="CLU_065464_1_2_4"/>
<dbReference type="Proteomes" id="UP000002676">
    <property type="component" value="Chromosome"/>
</dbReference>
<dbReference type="GO" id="GO:0022625">
    <property type="term" value="C:cytosolic large ribosomal subunit"/>
    <property type="evidence" value="ECO:0007669"/>
    <property type="project" value="TreeGrafter"/>
</dbReference>
<dbReference type="GO" id="GO:0019843">
    <property type="term" value="F:rRNA binding"/>
    <property type="evidence" value="ECO:0007669"/>
    <property type="project" value="UniProtKB-UniRule"/>
</dbReference>
<dbReference type="GO" id="GO:0003735">
    <property type="term" value="F:structural constituent of ribosome"/>
    <property type="evidence" value="ECO:0007669"/>
    <property type="project" value="InterPro"/>
</dbReference>
<dbReference type="GO" id="GO:0002181">
    <property type="term" value="P:cytoplasmic translation"/>
    <property type="evidence" value="ECO:0007669"/>
    <property type="project" value="TreeGrafter"/>
</dbReference>
<dbReference type="FunFam" id="3.90.930.12:FF:000001">
    <property type="entry name" value="50S ribosomal protein L6"/>
    <property type="match status" value="1"/>
</dbReference>
<dbReference type="FunFam" id="3.90.930.12:FF:000002">
    <property type="entry name" value="50S ribosomal protein L6"/>
    <property type="match status" value="1"/>
</dbReference>
<dbReference type="Gene3D" id="3.90.930.12">
    <property type="entry name" value="Ribosomal protein L6, alpha-beta domain"/>
    <property type="match status" value="2"/>
</dbReference>
<dbReference type="HAMAP" id="MF_01365_B">
    <property type="entry name" value="Ribosomal_uL6_B"/>
    <property type="match status" value="1"/>
</dbReference>
<dbReference type="InterPro" id="IPR000702">
    <property type="entry name" value="Ribosomal_uL6-like"/>
</dbReference>
<dbReference type="InterPro" id="IPR036789">
    <property type="entry name" value="Ribosomal_uL6-like_a/b-dom_sf"/>
</dbReference>
<dbReference type="InterPro" id="IPR020040">
    <property type="entry name" value="Ribosomal_uL6_a/b-dom"/>
</dbReference>
<dbReference type="InterPro" id="IPR019906">
    <property type="entry name" value="Ribosomal_uL6_bac-type"/>
</dbReference>
<dbReference type="InterPro" id="IPR002358">
    <property type="entry name" value="Ribosomal_uL6_CS"/>
</dbReference>
<dbReference type="NCBIfam" id="TIGR03654">
    <property type="entry name" value="L6_bact"/>
    <property type="match status" value="1"/>
</dbReference>
<dbReference type="PANTHER" id="PTHR11655">
    <property type="entry name" value="60S/50S RIBOSOMAL PROTEIN L6/L9"/>
    <property type="match status" value="1"/>
</dbReference>
<dbReference type="PANTHER" id="PTHR11655:SF14">
    <property type="entry name" value="LARGE RIBOSOMAL SUBUNIT PROTEIN UL6M"/>
    <property type="match status" value="1"/>
</dbReference>
<dbReference type="Pfam" id="PF00347">
    <property type="entry name" value="Ribosomal_L6"/>
    <property type="match status" value="2"/>
</dbReference>
<dbReference type="PIRSF" id="PIRSF002162">
    <property type="entry name" value="Ribosomal_L6"/>
    <property type="match status" value="1"/>
</dbReference>
<dbReference type="PRINTS" id="PR00059">
    <property type="entry name" value="RIBOSOMALL6"/>
</dbReference>
<dbReference type="SUPFAM" id="SSF56053">
    <property type="entry name" value="Ribosomal protein L6"/>
    <property type="match status" value="2"/>
</dbReference>
<dbReference type="PROSITE" id="PS00525">
    <property type="entry name" value="RIBOSOMAL_L6_1"/>
    <property type="match status" value="1"/>
</dbReference>
<name>RL6_BORPE</name>